<name>NRFG_ECO57</name>
<dbReference type="EMBL" id="AE005174">
    <property type="protein sequence ID" value="AAG59274.1"/>
    <property type="molecule type" value="Genomic_DNA"/>
</dbReference>
<dbReference type="EMBL" id="BA000007">
    <property type="protein sequence ID" value="BAB38481.1"/>
    <property type="molecule type" value="Genomic_DNA"/>
</dbReference>
<dbReference type="PIR" id="B91261">
    <property type="entry name" value="B91261"/>
</dbReference>
<dbReference type="PIR" id="F86101">
    <property type="entry name" value="F86101"/>
</dbReference>
<dbReference type="RefSeq" id="NP_313085.1">
    <property type="nucleotide sequence ID" value="NC_002695.1"/>
</dbReference>
<dbReference type="RefSeq" id="WP_000812974.1">
    <property type="nucleotide sequence ID" value="NZ_VOAI01000008.1"/>
</dbReference>
<dbReference type="PDB" id="2E2E">
    <property type="method" value="X-ray"/>
    <property type="resolution" value="2.05 A"/>
    <property type="chains" value="A/B=30-198"/>
</dbReference>
<dbReference type="PDBsum" id="2E2E"/>
<dbReference type="SMR" id="Q8X5S3"/>
<dbReference type="STRING" id="155864.Z5675"/>
<dbReference type="GeneID" id="914282"/>
<dbReference type="KEGG" id="ece:Z5675"/>
<dbReference type="KEGG" id="ecs:ECs_5058"/>
<dbReference type="PATRIC" id="fig|386585.9.peg.5284"/>
<dbReference type="eggNOG" id="COG4235">
    <property type="taxonomic scope" value="Bacteria"/>
</dbReference>
<dbReference type="HOGENOM" id="CLU_036074_3_1_6"/>
<dbReference type="OMA" id="ICFDYAI"/>
<dbReference type="EvolutionaryTrace" id="Q8X5S3"/>
<dbReference type="Proteomes" id="UP000000558">
    <property type="component" value="Chromosome"/>
</dbReference>
<dbReference type="Proteomes" id="UP000002519">
    <property type="component" value="Chromosome"/>
</dbReference>
<dbReference type="GO" id="GO:0005886">
    <property type="term" value="C:plasma membrane"/>
    <property type="evidence" value="ECO:0007669"/>
    <property type="project" value="TreeGrafter"/>
</dbReference>
<dbReference type="FunFam" id="1.25.40.10:FF:000268">
    <property type="entry name" value="Formate-dependent nitrite reductase complex subunit nrfG"/>
    <property type="match status" value="1"/>
</dbReference>
<dbReference type="Gene3D" id="1.25.40.10">
    <property type="entry name" value="Tetratricopeptide repeat domain"/>
    <property type="match status" value="1"/>
</dbReference>
<dbReference type="InterPro" id="IPR051263">
    <property type="entry name" value="C-type_cytochrome_biogenesis"/>
</dbReference>
<dbReference type="InterPro" id="IPR011990">
    <property type="entry name" value="TPR-like_helical_dom_sf"/>
</dbReference>
<dbReference type="InterPro" id="IPR056413">
    <property type="entry name" value="TPR_CcmH_CycH"/>
</dbReference>
<dbReference type="InterPro" id="IPR019734">
    <property type="entry name" value="TPR_rpt"/>
</dbReference>
<dbReference type="NCBIfam" id="NF007692">
    <property type="entry name" value="PRK10370.1"/>
    <property type="match status" value="1"/>
</dbReference>
<dbReference type="PANTHER" id="PTHR47870">
    <property type="entry name" value="CYTOCHROME C-TYPE BIOGENESIS PROTEIN CCMH"/>
    <property type="match status" value="1"/>
</dbReference>
<dbReference type="PANTHER" id="PTHR47870:SF4">
    <property type="entry name" value="CYTOCHROME C-TYPE BIOGENESIS PROTEIN CYCH"/>
    <property type="match status" value="1"/>
</dbReference>
<dbReference type="Pfam" id="PF23914">
    <property type="entry name" value="TPR_CcmH_CycH"/>
    <property type="match status" value="1"/>
</dbReference>
<dbReference type="SMART" id="SM00028">
    <property type="entry name" value="TPR"/>
    <property type="match status" value="2"/>
</dbReference>
<dbReference type="SUPFAM" id="SSF48452">
    <property type="entry name" value="TPR-like"/>
    <property type="match status" value="1"/>
</dbReference>
<dbReference type="PROSITE" id="PS50005">
    <property type="entry name" value="TPR"/>
    <property type="match status" value="2"/>
</dbReference>
<dbReference type="PROSITE" id="PS50293">
    <property type="entry name" value="TPR_REGION"/>
    <property type="match status" value="1"/>
</dbReference>
<protein>
    <recommendedName>
        <fullName>Formate-dependent nitrite reductase complex subunit NrfG</fullName>
    </recommendedName>
</protein>
<reference key="1">
    <citation type="journal article" date="2001" name="Nature">
        <title>Genome sequence of enterohaemorrhagic Escherichia coli O157:H7.</title>
        <authorList>
            <person name="Perna N.T."/>
            <person name="Plunkett G. III"/>
            <person name="Burland V."/>
            <person name="Mau B."/>
            <person name="Glasner J.D."/>
            <person name="Rose D.J."/>
            <person name="Mayhew G.F."/>
            <person name="Evans P.S."/>
            <person name="Gregor J."/>
            <person name="Kirkpatrick H.A."/>
            <person name="Posfai G."/>
            <person name="Hackett J."/>
            <person name="Klink S."/>
            <person name="Boutin A."/>
            <person name="Shao Y."/>
            <person name="Miller L."/>
            <person name="Grotbeck E.J."/>
            <person name="Davis N.W."/>
            <person name="Lim A."/>
            <person name="Dimalanta E.T."/>
            <person name="Potamousis K."/>
            <person name="Apodaca J."/>
            <person name="Anantharaman T.S."/>
            <person name="Lin J."/>
            <person name="Yen G."/>
            <person name="Schwartz D.C."/>
            <person name="Welch R.A."/>
            <person name="Blattner F.R."/>
        </authorList>
    </citation>
    <scope>NUCLEOTIDE SEQUENCE [LARGE SCALE GENOMIC DNA]</scope>
    <source>
        <strain>O157:H7 / EDL933 / ATCC 700927 / EHEC</strain>
    </source>
</reference>
<reference key="2">
    <citation type="journal article" date="2001" name="DNA Res.">
        <title>Complete genome sequence of enterohemorrhagic Escherichia coli O157:H7 and genomic comparison with a laboratory strain K-12.</title>
        <authorList>
            <person name="Hayashi T."/>
            <person name="Makino K."/>
            <person name="Ohnishi M."/>
            <person name="Kurokawa K."/>
            <person name="Ishii K."/>
            <person name="Yokoyama K."/>
            <person name="Han C.-G."/>
            <person name="Ohtsubo E."/>
            <person name="Nakayama K."/>
            <person name="Murata T."/>
            <person name="Tanaka M."/>
            <person name="Tobe T."/>
            <person name="Iida T."/>
            <person name="Takami H."/>
            <person name="Honda T."/>
            <person name="Sasakawa C."/>
            <person name="Ogasawara N."/>
            <person name="Yasunaga T."/>
            <person name="Kuhara S."/>
            <person name="Shiba T."/>
            <person name="Hattori M."/>
            <person name="Shinagawa H."/>
        </authorList>
    </citation>
    <scope>NUCLEOTIDE SEQUENCE [LARGE SCALE GENOMIC DNA]</scope>
    <source>
        <strain>O157:H7 / Sakai / RIMD 0509952 / EHEC</strain>
    </source>
</reference>
<sequence>MKQPQIPVKMLTTLTILMVFLCIGSYLLSPKWQAVRAEYQRQRDPLHQFASQQNPEAQLQALQDKIRANPQNSEQWALLGEYYLWQNDYSNSLLAYRQALQLRGENAELYAALATVLYYQASQHMTAQTRAMIDKALALDSNEITALMLLASDAFMQANYAQAIELWQKVMDLNSPRINRTQLVESINMAKLLQRRSD</sequence>
<accession>Q8X5S3</accession>
<organism>
    <name type="scientific">Escherichia coli O157:H7</name>
    <dbReference type="NCBI Taxonomy" id="83334"/>
    <lineage>
        <taxon>Bacteria</taxon>
        <taxon>Pseudomonadati</taxon>
        <taxon>Pseudomonadota</taxon>
        <taxon>Gammaproteobacteria</taxon>
        <taxon>Enterobacterales</taxon>
        <taxon>Enterobacteriaceae</taxon>
        <taxon>Escherichia</taxon>
    </lineage>
</organism>
<proteinExistence type="evidence at protein level"/>
<feature type="chain" id="PRO_0000106434" description="Formate-dependent nitrite reductase complex subunit NrfG">
    <location>
        <begin position="1"/>
        <end position="198"/>
    </location>
</feature>
<feature type="repeat" description="TPR 1">
    <location>
        <begin position="73"/>
        <end position="106"/>
    </location>
</feature>
<feature type="repeat" description="TPR 2">
    <location>
        <begin position="144"/>
        <end position="177"/>
    </location>
</feature>
<feature type="turn" evidence="1">
    <location>
        <begin position="44"/>
        <end position="46"/>
    </location>
</feature>
<feature type="helix" evidence="1">
    <location>
        <begin position="60"/>
        <end position="68"/>
    </location>
</feature>
<feature type="helix" evidence="1">
    <location>
        <begin position="73"/>
        <end position="85"/>
    </location>
</feature>
<feature type="helix" evidence="1">
    <location>
        <begin position="89"/>
        <end position="103"/>
    </location>
</feature>
<feature type="helix" evidence="1">
    <location>
        <begin position="107"/>
        <end position="120"/>
    </location>
</feature>
<feature type="turn" evidence="1">
    <location>
        <begin position="121"/>
        <end position="123"/>
    </location>
</feature>
<feature type="helix" evidence="1">
    <location>
        <begin position="127"/>
        <end position="139"/>
    </location>
</feature>
<feature type="helix" evidence="1">
    <location>
        <begin position="144"/>
        <end position="156"/>
    </location>
</feature>
<feature type="helix" evidence="1">
    <location>
        <begin position="160"/>
        <end position="172"/>
    </location>
</feature>
<feature type="helix" evidence="1">
    <location>
        <begin position="180"/>
        <end position="198"/>
    </location>
</feature>
<gene>
    <name type="primary">nrfG</name>
    <name type="ordered locus">Z5675</name>
    <name type="ordered locus">ECs5058</name>
</gene>
<comment type="function">
    <text>Required for formate-dependent nitrite reduction. Not required for the biosynthesis of any of the c-type cytochromes nor for the secretion of the periplasmic cytochromes.</text>
</comment>
<keyword id="KW-0002">3D-structure</keyword>
<keyword id="KW-1185">Reference proteome</keyword>
<keyword id="KW-0677">Repeat</keyword>
<keyword id="KW-0802">TPR repeat</keyword>
<evidence type="ECO:0007829" key="1">
    <source>
        <dbReference type="PDB" id="2E2E"/>
    </source>
</evidence>